<dbReference type="EMBL" id="Y17692">
    <property type="protein sequence ID" value="CAA76816.1"/>
    <property type="molecule type" value="Genomic_DNA"/>
</dbReference>
<dbReference type="Proteomes" id="UP000694863">
    <property type="component" value="Unplaced"/>
</dbReference>
<dbReference type="GO" id="GO:0009986">
    <property type="term" value="C:cell surface"/>
    <property type="evidence" value="ECO:0000250"/>
    <property type="project" value="UniProtKB"/>
</dbReference>
<dbReference type="GO" id="GO:0005886">
    <property type="term" value="C:plasma membrane"/>
    <property type="evidence" value="ECO:0007669"/>
    <property type="project" value="UniProtKB-SubCell"/>
</dbReference>
<dbReference type="GO" id="GO:0004938">
    <property type="term" value="F:alpha2-adrenergic receptor activity"/>
    <property type="evidence" value="ECO:0007669"/>
    <property type="project" value="InterPro"/>
</dbReference>
<dbReference type="GO" id="GO:0051379">
    <property type="term" value="F:epinephrine binding"/>
    <property type="evidence" value="ECO:0007669"/>
    <property type="project" value="TreeGrafter"/>
</dbReference>
<dbReference type="GO" id="GO:0030168">
    <property type="term" value="P:platelet activation"/>
    <property type="evidence" value="ECO:0007669"/>
    <property type="project" value="InterPro"/>
</dbReference>
<dbReference type="GO" id="GO:0006940">
    <property type="term" value="P:regulation of smooth muscle contraction"/>
    <property type="evidence" value="ECO:0007669"/>
    <property type="project" value="InterPro"/>
</dbReference>
<dbReference type="GO" id="GO:0019229">
    <property type="term" value="P:regulation of vasoconstriction"/>
    <property type="evidence" value="ECO:0007669"/>
    <property type="project" value="InterPro"/>
</dbReference>
<dbReference type="CDD" id="cd15321">
    <property type="entry name" value="7tmA_alpha2B_AR"/>
    <property type="match status" value="1"/>
</dbReference>
<dbReference type="FunFam" id="1.20.1070.10:FF:000330">
    <property type="entry name" value="Alpha 2B adrenergic receptor"/>
    <property type="match status" value="1"/>
</dbReference>
<dbReference type="FunFam" id="1.20.1070.10:FF:000185">
    <property type="entry name" value="Alpha-2B adrenergic receptor"/>
    <property type="match status" value="1"/>
</dbReference>
<dbReference type="Gene3D" id="1.20.1070.10">
    <property type="entry name" value="Rhodopsin 7-helix transmembrane proteins"/>
    <property type="match status" value="2"/>
</dbReference>
<dbReference type="InterPro" id="IPR002233">
    <property type="entry name" value="ADR_fam"/>
</dbReference>
<dbReference type="InterPro" id="IPR000207">
    <property type="entry name" value="ADRA2B_rcpt"/>
</dbReference>
<dbReference type="InterPro" id="IPR000276">
    <property type="entry name" value="GPCR_Rhodpsn"/>
</dbReference>
<dbReference type="InterPro" id="IPR017452">
    <property type="entry name" value="GPCR_Rhodpsn_7TM"/>
</dbReference>
<dbReference type="PANTHER" id="PTHR24248">
    <property type="entry name" value="ADRENERGIC RECEPTOR-RELATED G-PROTEIN COUPLED RECEPTOR"/>
    <property type="match status" value="1"/>
</dbReference>
<dbReference type="PANTHER" id="PTHR24248:SF130">
    <property type="entry name" value="ALPHA-2B ADRENERGIC RECEPTOR"/>
    <property type="match status" value="1"/>
</dbReference>
<dbReference type="Pfam" id="PF00001">
    <property type="entry name" value="7tm_1"/>
    <property type="match status" value="1"/>
</dbReference>
<dbReference type="PRINTS" id="PR01103">
    <property type="entry name" value="ADRENERGICR"/>
</dbReference>
<dbReference type="PRINTS" id="PR00559">
    <property type="entry name" value="ADRENRGCA2BR"/>
</dbReference>
<dbReference type="PRINTS" id="PR00237">
    <property type="entry name" value="GPCRRHODOPSN"/>
</dbReference>
<dbReference type="SUPFAM" id="SSF81321">
    <property type="entry name" value="Family A G protein-coupled receptor-like"/>
    <property type="match status" value="1"/>
</dbReference>
<dbReference type="PROSITE" id="PS00237">
    <property type="entry name" value="G_PROTEIN_RECEP_F1_1"/>
    <property type="match status" value="1"/>
</dbReference>
<dbReference type="PROSITE" id="PS50262">
    <property type="entry name" value="G_PROTEIN_RECEP_F1_2"/>
    <property type="match status" value="1"/>
</dbReference>
<feature type="chain" id="PRO_0000069090" description="Alpha-2B adrenergic receptor">
    <location>
        <begin position="1" status="less than"/>
        <end position="384" status="greater than"/>
    </location>
</feature>
<feature type="transmembrane region" description="Helical; Name=1" evidence="1">
    <location>
        <begin position="1" status="less than"/>
        <end position="25"/>
    </location>
</feature>
<feature type="topological domain" description="Cytoplasmic" evidence="1">
    <location>
        <begin position="26"/>
        <end position="36"/>
    </location>
</feature>
<feature type="transmembrane region" description="Helical; Name=2" evidence="1">
    <location>
        <begin position="37"/>
        <end position="62"/>
    </location>
</feature>
<feature type="topological domain" description="Extracellular" evidence="1">
    <location>
        <begin position="63"/>
        <end position="72"/>
    </location>
</feature>
<feature type="transmembrane region" description="Helical; Name=3" evidence="1">
    <location>
        <begin position="73"/>
        <end position="95"/>
    </location>
</feature>
<feature type="topological domain" description="Cytoplasmic" evidence="1">
    <location>
        <begin position="96"/>
        <end position="117"/>
    </location>
</feature>
<feature type="transmembrane region" description="Helical; Name=4" evidence="1">
    <location>
        <begin position="118"/>
        <end position="140"/>
    </location>
</feature>
<feature type="topological domain" description="Extracellular" evidence="1">
    <location>
        <begin position="141"/>
        <end position="156"/>
    </location>
</feature>
<feature type="transmembrane region" description="Helical; Name=5" evidence="1">
    <location>
        <begin position="157"/>
        <end position="180"/>
    </location>
</feature>
<feature type="topological domain" description="Cytoplasmic" evidence="1">
    <location>
        <begin position="181"/>
        <end position="348"/>
    </location>
</feature>
<feature type="transmembrane region" description="Helical; Name=6" evidence="1">
    <location>
        <begin position="349"/>
        <end position="372"/>
    </location>
</feature>
<feature type="topological domain" description="Extracellular" evidence="1">
    <location>
        <begin position="373"/>
        <end position="381"/>
    </location>
</feature>
<feature type="transmembrane region" description="Helical; Name=7" evidence="1">
    <location>
        <begin position="382"/>
        <end position="384" status="greater than"/>
    </location>
</feature>
<feature type="region of interest" description="Disordered" evidence="4">
    <location>
        <begin position="193"/>
        <end position="306"/>
    </location>
</feature>
<feature type="compositionally biased region" description="Low complexity" evidence="4">
    <location>
        <begin position="288"/>
        <end position="306"/>
    </location>
</feature>
<feature type="disulfide bond" evidence="3">
    <location>
        <begin position="72"/>
        <end position="151"/>
    </location>
</feature>
<feature type="non-terminal residue">
    <location>
        <position position="1"/>
    </location>
</feature>
<feature type="non-terminal residue">
    <location>
        <position position="384"/>
    </location>
</feature>
<reference key="1">
    <citation type="journal article" date="1998" name="Proc. Natl. Acad. Sci. U.S.A.">
        <title>Molecular evidence for multiple origins of Insectivora and for a new order of endemic African insectivore mammals.</title>
        <authorList>
            <person name="Stanhope M.J."/>
            <person name="Waddell V.G."/>
            <person name="Madsen O.J."/>
            <person name="de Jong W.W."/>
            <person name="Hedges S.B."/>
            <person name="Cleven G.C."/>
            <person name="Kao D."/>
            <person name="Springer M.S."/>
        </authorList>
    </citation>
    <scope>NUCLEOTIDE SEQUENCE [GENOMIC DNA]</scope>
</reference>
<name>ADA2B_ECHTE</name>
<accession>O77723</accession>
<organism>
    <name type="scientific">Echinops telfairi</name>
    <name type="common">Lesser hedgehog tenrec</name>
    <dbReference type="NCBI Taxonomy" id="9371"/>
    <lineage>
        <taxon>Eukaryota</taxon>
        <taxon>Metazoa</taxon>
        <taxon>Chordata</taxon>
        <taxon>Craniata</taxon>
        <taxon>Vertebrata</taxon>
        <taxon>Euteleostomi</taxon>
        <taxon>Mammalia</taxon>
        <taxon>Eutheria</taxon>
        <taxon>Afrotheria</taxon>
        <taxon>Tenrecidae</taxon>
        <taxon>Tenrecinae</taxon>
        <taxon>Echinops</taxon>
    </lineage>
</organism>
<keyword id="KW-1003">Cell membrane</keyword>
<keyword id="KW-1015">Disulfide bond</keyword>
<keyword id="KW-0297">G-protein coupled receptor</keyword>
<keyword id="KW-0472">Membrane</keyword>
<keyword id="KW-0675">Receptor</keyword>
<keyword id="KW-0807">Transducer</keyword>
<keyword id="KW-0812">Transmembrane</keyword>
<keyword id="KW-1133">Transmembrane helix</keyword>
<protein>
    <recommendedName>
        <fullName>Alpha-2B adrenergic receptor</fullName>
    </recommendedName>
    <alternativeName>
        <fullName>Alpha-2B adrenoreceptor</fullName>
        <shortName>Alpha-2B adrenoceptor</shortName>
        <shortName>Alpha-2BAR</shortName>
    </alternativeName>
</protein>
<comment type="function">
    <text>Alpha-2 adrenergic receptors mediate the catecholamine-induced inhibition of adenylate cyclase through the action of G proteins.</text>
</comment>
<comment type="subunit">
    <text evidence="2">Interacts with RAB26. Interacts with PPP1R9B. Interacts with GGA1, GGA2 and GGA3.</text>
</comment>
<comment type="subcellular location">
    <subcellularLocation>
        <location evidence="2">Cell membrane</location>
        <topology evidence="2">Multi-pass membrane protein</topology>
    </subcellularLocation>
    <text evidence="2">Interaction with RAB26, GGA1, GGA2 and GGA3 mediates transport from the Golgi to the cell membrane.</text>
</comment>
<comment type="similarity">
    <text evidence="3">Belongs to the G-protein coupled receptor 1 family. Adrenergic receptor subfamily. ADRA2B sub-subfamily.</text>
</comment>
<evidence type="ECO:0000250" key="1"/>
<evidence type="ECO:0000250" key="2">
    <source>
        <dbReference type="UniProtKB" id="P18089"/>
    </source>
</evidence>
<evidence type="ECO:0000255" key="3">
    <source>
        <dbReference type="PROSITE-ProRule" id="PRU00521"/>
    </source>
</evidence>
<evidence type="ECO:0000256" key="4">
    <source>
        <dbReference type="SAM" id="MobiDB-lite"/>
    </source>
</evidence>
<proteinExistence type="inferred from homology"/>
<sequence length="384" mass="41692">AIAAVTTFLILFTVFGNALVILAVLTSRSLRAPQNLFLVSLAAADILVATLIXPFSLANELLGYWYFWHTWCEVYLALXVLXCTSSIVHLCAISLDRYWAVSRALEYNSKRTPRRIXGIILTVWLIAAAISLPPLIYKGDQGPQPHGRPQCRLNQEAWYILSSSIGSFFAPCLIMILVYLRIYLIAKRRNRRGPRAQGASKGGASKQPHPLAGGASTKPPTLTSSLAVAGEVNGHSKPTGQEGKTPEDLGVVTLPPNWPALPNSGQGQKEGVCGISPEXAEEEEEGGPEALPASPASXGSPQLQQPQGTRVLVTLRGQVVLSRGLGAASGQWWRRRTQLTREKRFTFVLAVVIGVXVLCWFPFFXSYSLGAICPQHCTVXHGLF</sequence>
<gene>
    <name type="primary">ADRA2B</name>
</gene>